<proteinExistence type="evidence at transcript level"/>
<gene>
    <name type="ordered locus">At4g11690</name>
    <name type="ORF">T5C23.120</name>
</gene>
<keyword id="KW-1185">Reference proteome</keyword>
<keyword id="KW-0677">Repeat</keyword>
<evidence type="ECO:0000305" key="1"/>
<comment type="similarity">
    <text evidence="1">Belongs to the PPR family. P subfamily.</text>
</comment>
<comment type="online information" name="Pentatricopeptide repeat proteins">
    <link uri="https://ppr.plantenergy.uwa.edu.au"/>
</comment>
<reference key="1">
    <citation type="journal article" date="1999" name="Nature">
        <title>Sequence and analysis of chromosome 4 of the plant Arabidopsis thaliana.</title>
        <authorList>
            <person name="Mayer K.F.X."/>
            <person name="Schueller C."/>
            <person name="Wambutt R."/>
            <person name="Murphy G."/>
            <person name="Volckaert G."/>
            <person name="Pohl T."/>
            <person name="Duesterhoeft A."/>
            <person name="Stiekema W."/>
            <person name="Entian K.-D."/>
            <person name="Terryn N."/>
            <person name="Harris B."/>
            <person name="Ansorge W."/>
            <person name="Brandt P."/>
            <person name="Grivell L.A."/>
            <person name="Rieger M."/>
            <person name="Weichselgartner M."/>
            <person name="de Simone V."/>
            <person name="Obermaier B."/>
            <person name="Mache R."/>
            <person name="Mueller M."/>
            <person name="Kreis M."/>
            <person name="Delseny M."/>
            <person name="Puigdomenech P."/>
            <person name="Watson M."/>
            <person name="Schmidtheini T."/>
            <person name="Reichert B."/>
            <person name="Portetelle D."/>
            <person name="Perez-Alonso M."/>
            <person name="Boutry M."/>
            <person name="Bancroft I."/>
            <person name="Vos P."/>
            <person name="Hoheisel J."/>
            <person name="Zimmermann W."/>
            <person name="Wedler H."/>
            <person name="Ridley P."/>
            <person name="Langham S.-A."/>
            <person name="McCullagh B."/>
            <person name="Bilham L."/>
            <person name="Robben J."/>
            <person name="van der Schueren J."/>
            <person name="Grymonprez B."/>
            <person name="Chuang Y.-J."/>
            <person name="Vandenbussche F."/>
            <person name="Braeken M."/>
            <person name="Weltjens I."/>
            <person name="Voet M."/>
            <person name="Bastiaens I."/>
            <person name="Aert R."/>
            <person name="Defoor E."/>
            <person name="Weitzenegger T."/>
            <person name="Bothe G."/>
            <person name="Ramsperger U."/>
            <person name="Hilbert H."/>
            <person name="Braun M."/>
            <person name="Holzer E."/>
            <person name="Brandt A."/>
            <person name="Peters S."/>
            <person name="van Staveren M."/>
            <person name="Dirkse W."/>
            <person name="Mooijman P."/>
            <person name="Klein Lankhorst R."/>
            <person name="Rose M."/>
            <person name="Hauf J."/>
            <person name="Koetter P."/>
            <person name="Berneiser S."/>
            <person name="Hempel S."/>
            <person name="Feldpausch M."/>
            <person name="Lamberth S."/>
            <person name="Van den Daele H."/>
            <person name="De Keyser A."/>
            <person name="Buysshaert C."/>
            <person name="Gielen J."/>
            <person name="Villarroel R."/>
            <person name="De Clercq R."/>
            <person name="van Montagu M."/>
            <person name="Rogers J."/>
            <person name="Cronin A."/>
            <person name="Quail M.A."/>
            <person name="Bray-Allen S."/>
            <person name="Clark L."/>
            <person name="Doggett J."/>
            <person name="Hall S."/>
            <person name="Kay M."/>
            <person name="Lennard N."/>
            <person name="McLay K."/>
            <person name="Mayes R."/>
            <person name="Pettett A."/>
            <person name="Rajandream M.A."/>
            <person name="Lyne M."/>
            <person name="Benes V."/>
            <person name="Rechmann S."/>
            <person name="Borkova D."/>
            <person name="Bloecker H."/>
            <person name="Scharfe M."/>
            <person name="Grimm M."/>
            <person name="Loehnert T.-H."/>
            <person name="Dose S."/>
            <person name="de Haan M."/>
            <person name="Maarse A.C."/>
            <person name="Schaefer M."/>
            <person name="Mueller-Auer S."/>
            <person name="Gabel C."/>
            <person name="Fuchs M."/>
            <person name="Fartmann B."/>
            <person name="Granderath K."/>
            <person name="Dauner D."/>
            <person name="Herzl A."/>
            <person name="Neumann S."/>
            <person name="Argiriou A."/>
            <person name="Vitale D."/>
            <person name="Liguori R."/>
            <person name="Piravandi E."/>
            <person name="Massenet O."/>
            <person name="Quigley F."/>
            <person name="Clabauld G."/>
            <person name="Muendlein A."/>
            <person name="Felber R."/>
            <person name="Schnabl S."/>
            <person name="Hiller R."/>
            <person name="Schmidt W."/>
            <person name="Lecharny A."/>
            <person name="Aubourg S."/>
            <person name="Chefdor F."/>
            <person name="Cooke R."/>
            <person name="Berger C."/>
            <person name="Monfort A."/>
            <person name="Casacuberta E."/>
            <person name="Gibbons T."/>
            <person name="Weber N."/>
            <person name="Vandenbol M."/>
            <person name="Bargues M."/>
            <person name="Terol J."/>
            <person name="Torres A."/>
            <person name="Perez-Perez A."/>
            <person name="Purnelle B."/>
            <person name="Bent E."/>
            <person name="Johnson S."/>
            <person name="Tacon D."/>
            <person name="Jesse T."/>
            <person name="Heijnen L."/>
            <person name="Schwarz S."/>
            <person name="Scholler P."/>
            <person name="Heber S."/>
            <person name="Francs P."/>
            <person name="Bielke C."/>
            <person name="Frishman D."/>
            <person name="Haase D."/>
            <person name="Lemcke K."/>
            <person name="Mewes H.-W."/>
            <person name="Stocker S."/>
            <person name="Zaccaria P."/>
            <person name="Bevan M."/>
            <person name="Wilson R.K."/>
            <person name="de la Bastide M."/>
            <person name="Habermann K."/>
            <person name="Parnell L."/>
            <person name="Dedhia N."/>
            <person name="Gnoj L."/>
            <person name="Schutz K."/>
            <person name="Huang E."/>
            <person name="Spiegel L."/>
            <person name="Sekhon M."/>
            <person name="Murray J."/>
            <person name="Sheet P."/>
            <person name="Cordes M."/>
            <person name="Abu-Threideh J."/>
            <person name="Stoneking T."/>
            <person name="Kalicki J."/>
            <person name="Graves T."/>
            <person name="Harmon G."/>
            <person name="Edwards J."/>
            <person name="Latreille P."/>
            <person name="Courtney L."/>
            <person name="Cloud J."/>
            <person name="Abbott A."/>
            <person name="Scott K."/>
            <person name="Johnson D."/>
            <person name="Minx P."/>
            <person name="Bentley D."/>
            <person name="Fulton B."/>
            <person name="Miller N."/>
            <person name="Greco T."/>
            <person name="Kemp K."/>
            <person name="Kramer J."/>
            <person name="Fulton L."/>
            <person name="Mardis E."/>
            <person name="Dante M."/>
            <person name="Pepin K."/>
            <person name="Hillier L.W."/>
            <person name="Nelson J."/>
            <person name="Spieth J."/>
            <person name="Ryan E."/>
            <person name="Andrews S."/>
            <person name="Geisel C."/>
            <person name="Layman D."/>
            <person name="Du H."/>
            <person name="Ali J."/>
            <person name="Berghoff A."/>
            <person name="Jones K."/>
            <person name="Drone K."/>
            <person name="Cotton M."/>
            <person name="Joshu C."/>
            <person name="Antonoiu B."/>
            <person name="Zidanic M."/>
            <person name="Strong C."/>
            <person name="Sun H."/>
            <person name="Lamar B."/>
            <person name="Yordan C."/>
            <person name="Ma P."/>
            <person name="Zhong J."/>
            <person name="Preston R."/>
            <person name="Vil D."/>
            <person name="Shekher M."/>
            <person name="Matero A."/>
            <person name="Shah R."/>
            <person name="Swaby I.K."/>
            <person name="O'Shaughnessy A."/>
            <person name="Rodriguez M."/>
            <person name="Hoffman J."/>
            <person name="Till S."/>
            <person name="Granat S."/>
            <person name="Shohdy N."/>
            <person name="Hasegawa A."/>
            <person name="Hameed A."/>
            <person name="Lodhi M."/>
            <person name="Johnson A."/>
            <person name="Chen E."/>
            <person name="Marra M.A."/>
            <person name="Martienssen R."/>
            <person name="McCombie W.R."/>
        </authorList>
    </citation>
    <scope>NUCLEOTIDE SEQUENCE [LARGE SCALE GENOMIC DNA]</scope>
    <source>
        <strain>cv. Columbia</strain>
    </source>
</reference>
<reference key="2">
    <citation type="journal article" date="2017" name="Plant J.">
        <title>Araport11: a complete reannotation of the Arabidopsis thaliana reference genome.</title>
        <authorList>
            <person name="Cheng C.Y."/>
            <person name="Krishnakumar V."/>
            <person name="Chan A.P."/>
            <person name="Thibaud-Nissen F."/>
            <person name="Schobel S."/>
            <person name="Town C.D."/>
        </authorList>
    </citation>
    <scope>GENOME REANNOTATION</scope>
    <source>
        <strain>cv. Columbia</strain>
    </source>
</reference>
<reference key="3">
    <citation type="journal article" date="2006" name="Plant Biotechnol. J.">
        <title>Simultaneous high-throughput recombinational cloning of open reading frames in closed and open configurations.</title>
        <authorList>
            <person name="Underwood B.A."/>
            <person name="Vanderhaeghen R."/>
            <person name="Whitford R."/>
            <person name="Town C.D."/>
            <person name="Hilson P."/>
        </authorList>
    </citation>
    <scope>NUCLEOTIDE SEQUENCE [LARGE SCALE MRNA]</scope>
    <source>
        <strain>cv. Columbia</strain>
    </source>
</reference>
<reference key="4">
    <citation type="journal article" date="2004" name="Plant Cell">
        <title>Genome-wide analysis of Arabidopsis pentatricopeptide repeat proteins reveals their essential role in organelle biogenesis.</title>
        <authorList>
            <person name="Lurin C."/>
            <person name="Andres C."/>
            <person name="Aubourg S."/>
            <person name="Bellaoui M."/>
            <person name="Bitton F."/>
            <person name="Bruyere C."/>
            <person name="Caboche M."/>
            <person name="Debast C."/>
            <person name="Gualberto J."/>
            <person name="Hoffmann B."/>
            <person name="Lecharny A."/>
            <person name="Le Ret M."/>
            <person name="Martin-Magniette M.-L."/>
            <person name="Mireau H."/>
            <person name="Peeters N."/>
            <person name="Renou J.-P."/>
            <person name="Szurek B."/>
            <person name="Taconnat L."/>
            <person name="Small I."/>
        </authorList>
    </citation>
    <scope>GENE FAMILY</scope>
</reference>
<accession>Q9T0D6</accession>
<organism>
    <name type="scientific">Arabidopsis thaliana</name>
    <name type="common">Mouse-ear cress</name>
    <dbReference type="NCBI Taxonomy" id="3702"/>
    <lineage>
        <taxon>Eukaryota</taxon>
        <taxon>Viridiplantae</taxon>
        <taxon>Streptophyta</taxon>
        <taxon>Embryophyta</taxon>
        <taxon>Tracheophyta</taxon>
        <taxon>Spermatophyta</taxon>
        <taxon>Magnoliopsida</taxon>
        <taxon>eudicotyledons</taxon>
        <taxon>Gunneridae</taxon>
        <taxon>Pentapetalae</taxon>
        <taxon>rosids</taxon>
        <taxon>malvids</taxon>
        <taxon>Brassicales</taxon>
        <taxon>Brassicaceae</taxon>
        <taxon>Camelineae</taxon>
        <taxon>Arabidopsis</taxon>
    </lineage>
</organism>
<sequence length="566" mass="63786">MAAKSQKTLVLLANLIKFPPLKAFSLLNSPNFHEFQHTHESISILLRLLLSGNLFSHAQSLLLQVISGKIHSQFFTSSSLLHYLTESETSKTKFRLYEVIINSYVQSQSLNLSISYFNEMVDNGFVPGSNCFNYLLTFVVGSSSFNQWWSFFNENKSKVVLDVYSFGILIKGCCEAGEIEKSFDLLIELTEFGFSPNVVIYTTLIDGCCKKGEIEKAKDLFFEMGKLGLVANERTYTVLINGLFKNGVKKQGFEMYEKMQEDGVFPNLYTYNCVMNQLCKDGRTKDAFQVFDEMRERGVSCNIVTYNTLIGGLCREMKLNEANKVVDQMKSDGINPNLITYNTLIDGFCGVGKLGKALSLCRDLKSRGLSPSLVTYNILVSGFCRKGDTSGAAKMVKEMEERGIKPSKVTYTILIDTFARSDNMEKAIQLRLSMEELGLVPDVHTYSVLIHGFCIKGQMNEASRLFKSMVEKNCEPNEVIYNTMILGYCKEGSSYRALKLLKEMEEKELAPNVASYRYMIEVLCKERKSKEAERLVEKMIDSGIDPSTSILSLISRAKNDSHVSSK</sequence>
<name>PP306_ARATH</name>
<feature type="chain" id="PRO_0000363424" description="Pentatricopeptide repeat-containing protein At4g11690">
    <location>
        <begin position="1"/>
        <end position="566"/>
    </location>
</feature>
<feature type="repeat" description="PPR 1">
    <location>
        <begin position="93"/>
        <end position="127"/>
    </location>
</feature>
<feature type="repeat" description="PPR 2">
    <location>
        <begin position="128"/>
        <end position="158"/>
    </location>
</feature>
<feature type="repeat" description="PPR 3">
    <location>
        <begin position="162"/>
        <end position="196"/>
    </location>
</feature>
<feature type="repeat" description="PPR 4">
    <location>
        <begin position="197"/>
        <end position="231"/>
    </location>
</feature>
<feature type="repeat" description="PPR 5">
    <location>
        <begin position="232"/>
        <end position="266"/>
    </location>
</feature>
<feature type="repeat" description="PPR 6">
    <location>
        <begin position="267"/>
        <end position="301"/>
    </location>
</feature>
<feature type="repeat" description="PPR 7">
    <location>
        <begin position="302"/>
        <end position="336"/>
    </location>
</feature>
<feature type="repeat" description="PPR 8">
    <location>
        <begin position="337"/>
        <end position="371"/>
    </location>
</feature>
<feature type="repeat" description="PPR 9">
    <location>
        <begin position="372"/>
        <end position="406"/>
    </location>
</feature>
<feature type="repeat" description="PPR 10">
    <location>
        <begin position="407"/>
        <end position="441"/>
    </location>
</feature>
<feature type="repeat" description="PPR 11">
    <location>
        <begin position="442"/>
        <end position="476"/>
    </location>
</feature>
<feature type="repeat" description="PPR 12">
    <location>
        <begin position="477"/>
        <end position="511"/>
    </location>
</feature>
<feature type="repeat" description="PPR 13">
    <location>
        <begin position="512"/>
        <end position="546"/>
    </location>
</feature>
<protein>
    <recommendedName>
        <fullName>Pentatricopeptide repeat-containing protein At4g11690</fullName>
    </recommendedName>
</protein>
<dbReference type="EMBL" id="AL049500">
    <property type="protein sequence ID" value="CAB39940.1"/>
    <property type="molecule type" value="Genomic_DNA"/>
</dbReference>
<dbReference type="EMBL" id="AL161532">
    <property type="protein sequence ID" value="CAB78212.1"/>
    <property type="molecule type" value="Genomic_DNA"/>
</dbReference>
<dbReference type="EMBL" id="CP002687">
    <property type="protein sequence ID" value="AEE83039.1"/>
    <property type="molecule type" value="Genomic_DNA"/>
</dbReference>
<dbReference type="EMBL" id="DQ446820">
    <property type="protein sequence ID" value="ABE66057.1"/>
    <property type="molecule type" value="mRNA"/>
</dbReference>
<dbReference type="PIR" id="T04216">
    <property type="entry name" value="T04216"/>
</dbReference>
<dbReference type="RefSeq" id="NP_192906.1">
    <property type="nucleotide sequence ID" value="NM_117238.2"/>
</dbReference>
<dbReference type="SMR" id="Q9T0D6"/>
<dbReference type="FunCoup" id="Q9T0D6">
    <property type="interactions" value="1"/>
</dbReference>
<dbReference type="STRING" id="3702.Q9T0D6"/>
<dbReference type="iPTMnet" id="Q9T0D6"/>
<dbReference type="PaxDb" id="3702-AT4G11690.1"/>
<dbReference type="ProteomicsDB" id="249217"/>
<dbReference type="EnsemblPlants" id="AT4G11690.1">
    <property type="protein sequence ID" value="AT4G11690.1"/>
    <property type="gene ID" value="AT4G11690"/>
</dbReference>
<dbReference type="GeneID" id="826774"/>
<dbReference type="Gramene" id="AT4G11690.1">
    <property type="protein sequence ID" value="AT4G11690.1"/>
    <property type="gene ID" value="AT4G11690"/>
</dbReference>
<dbReference type="KEGG" id="ath:AT4G11690"/>
<dbReference type="Araport" id="AT4G11690"/>
<dbReference type="TAIR" id="AT4G11690">
    <property type="gene designation" value="ABO8"/>
</dbReference>
<dbReference type="eggNOG" id="KOG4197">
    <property type="taxonomic scope" value="Eukaryota"/>
</dbReference>
<dbReference type="HOGENOM" id="CLU_002706_49_12_1"/>
<dbReference type="InParanoid" id="Q9T0D6"/>
<dbReference type="OMA" id="IYNIMIY"/>
<dbReference type="PhylomeDB" id="Q9T0D6"/>
<dbReference type="PRO" id="PR:Q9T0D6"/>
<dbReference type="Proteomes" id="UP000006548">
    <property type="component" value="Chromosome 4"/>
</dbReference>
<dbReference type="ExpressionAtlas" id="Q9T0D6">
    <property type="expression patterns" value="baseline and differential"/>
</dbReference>
<dbReference type="GO" id="GO:0005739">
    <property type="term" value="C:mitochondrion"/>
    <property type="evidence" value="ECO:0007669"/>
    <property type="project" value="GOC"/>
</dbReference>
<dbReference type="GO" id="GO:0080156">
    <property type="term" value="P:mitochondrial mRNA modification"/>
    <property type="evidence" value="ECO:0000315"/>
    <property type="project" value="TAIR"/>
</dbReference>
<dbReference type="GO" id="GO:0009737">
    <property type="term" value="P:response to abscisic acid"/>
    <property type="evidence" value="ECO:0000315"/>
    <property type="project" value="TAIR"/>
</dbReference>
<dbReference type="Gene3D" id="1.25.40.10">
    <property type="entry name" value="Tetratricopeptide repeat domain"/>
    <property type="match status" value="6"/>
</dbReference>
<dbReference type="InterPro" id="IPR002885">
    <property type="entry name" value="Pentatricopeptide_rpt"/>
</dbReference>
<dbReference type="InterPro" id="IPR051222">
    <property type="entry name" value="PPR/CCM1_RNA-binding"/>
</dbReference>
<dbReference type="InterPro" id="IPR011990">
    <property type="entry name" value="TPR-like_helical_dom_sf"/>
</dbReference>
<dbReference type="NCBIfam" id="TIGR00756">
    <property type="entry name" value="PPR"/>
    <property type="match status" value="12"/>
</dbReference>
<dbReference type="PANTHER" id="PTHR47942:SF34">
    <property type="entry name" value="PPR CONTAINING PLANT-LIKE PROTEIN"/>
    <property type="match status" value="1"/>
</dbReference>
<dbReference type="PANTHER" id="PTHR47942">
    <property type="entry name" value="TETRATRICOPEPTIDE REPEAT (TPR)-LIKE SUPERFAMILY PROTEIN-RELATED"/>
    <property type="match status" value="1"/>
</dbReference>
<dbReference type="Pfam" id="PF01535">
    <property type="entry name" value="PPR"/>
    <property type="match status" value="2"/>
</dbReference>
<dbReference type="Pfam" id="PF12854">
    <property type="entry name" value="PPR_1"/>
    <property type="match status" value="2"/>
</dbReference>
<dbReference type="Pfam" id="PF13041">
    <property type="entry name" value="PPR_2"/>
    <property type="match status" value="4"/>
</dbReference>
<dbReference type="PROSITE" id="PS51375">
    <property type="entry name" value="PPR"/>
    <property type="match status" value="12"/>
</dbReference>